<dbReference type="EMBL" id="AE007870">
    <property type="protein sequence ID" value="AAK89620.1"/>
    <property type="molecule type" value="Genomic_DNA"/>
</dbReference>
<dbReference type="PIR" id="AH3022">
    <property type="entry name" value="AH3022"/>
</dbReference>
<dbReference type="PIR" id="B98262">
    <property type="entry name" value="B98262"/>
</dbReference>
<dbReference type="RefSeq" id="NP_356835.1">
    <property type="nucleotide sequence ID" value="NC_003063.2"/>
</dbReference>
<dbReference type="RefSeq" id="WP_010973321.1">
    <property type="nucleotide sequence ID" value="NC_003063.2"/>
</dbReference>
<dbReference type="SMR" id="Q8U9E0"/>
<dbReference type="STRING" id="176299.Atu3788"/>
<dbReference type="EnsemblBacteria" id="AAK89620">
    <property type="protein sequence ID" value="AAK89620"/>
    <property type="gene ID" value="Atu3788"/>
</dbReference>
<dbReference type="GeneID" id="1135662"/>
<dbReference type="KEGG" id="atu:Atu3788"/>
<dbReference type="PATRIC" id="fig|176299.10.peg.3626"/>
<dbReference type="eggNOG" id="COG2156">
    <property type="taxonomic scope" value="Bacteria"/>
</dbReference>
<dbReference type="HOGENOM" id="CLU_077094_2_0_5"/>
<dbReference type="OrthoDB" id="9788285at2"/>
<dbReference type="PhylomeDB" id="Q8U9E0"/>
<dbReference type="BioCyc" id="AGRO:ATU3788-MONOMER"/>
<dbReference type="Proteomes" id="UP000000813">
    <property type="component" value="Chromosome linear"/>
</dbReference>
<dbReference type="GO" id="GO:0005886">
    <property type="term" value="C:plasma membrane"/>
    <property type="evidence" value="ECO:0007669"/>
    <property type="project" value="UniProtKB-SubCell"/>
</dbReference>
<dbReference type="GO" id="GO:0005524">
    <property type="term" value="F:ATP binding"/>
    <property type="evidence" value="ECO:0007669"/>
    <property type="project" value="UniProtKB-UniRule"/>
</dbReference>
<dbReference type="GO" id="GO:0008556">
    <property type="term" value="F:P-type potassium transmembrane transporter activity"/>
    <property type="evidence" value="ECO:0007669"/>
    <property type="project" value="InterPro"/>
</dbReference>
<dbReference type="HAMAP" id="MF_00276">
    <property type="entry name" value="KdpC"/>
    <property type="match status" value="1"/>
</dbReference>
<dbReference type="InterPro" id="IPR003820">
    <property type="entry name" value="KdpC"/>
</dbReference>
<dbReference type="NCBIfam" id="TIGR00681">
    <property type="entry name" value="kdpC"/>
    <property type="match status" value="1"/>
</dbReference>
<dbReference type="NCBIfam" id="NF001454">
    <property type="entry name" value="PRK00315.1"/>
    <property type="match status" value="1"/>
</dbReference>
<dbReference type="PANTHER" id="PTHR30042">
    <property type="entry name" value="POTASSIUM-TRANSPORTING ATPASE C CHAIN"/>
    <property type="match status" value="1"/>
</dbReference>
<dbReference type="PANTHER" id="PTHR30042:SF2">
    <property type="entry name" value="POTASSIUM-TRANSPORTING ATPASE KDPC SUBUNIT"/>
    <property type="match status" value="1"/>
</dbReference>
<dbReference type="Pfam" id="PF02669">
    <property type="entry name" value="KdpC"/>
    <property type="match status" value="1"/>
</dbReference>
<dbReference type="PIRSF" id="PIRSF001296">
    <property type="entry name" value="K_ATPase_KdpC"/>
    <property type="match status" value="1"/>
</dbReference>
<keyword id="KW-0067">ATP-binding</keyword>
<keyword id="KW-0997">Cell inner membrane</keyword>
<keyword id="KW-1003">Cell membrane</keyword>
<keyword id="KW-0406">Ion transport</keyword>
<keyword id="KW-0472">Membrane</keyword>
<keyword id="KW-0547">Nucleotide-binding</keyword>
<keyword id="KW-0630">Potassium</keyword>
<keyword id="KW-0633">Potassium transport</keyword>
<keyword id="KW-1185">Reference proteome</keyword>
<keyword id="KW-0812">Transmembrane</keyword>
<keyword id="KW-1133">Transmembrane helix</keyword>
<keyword id="KW-0813">Transport</keyword>
<accession>Q8U9E0</accession>
<proteinExistence type="inferred from homology"/>
<gene>
    <name evidence="1" type="primary">kdpC</name>
    <name type="ordered locus">Atu3788</name>
    <name type="ORF">AGR_L_2092</name>
</gene>
<reference key="1">
    <citation type="journal article" date="2001" name="Science">
        <title>The genome of the natural genetic engineer Agrobacterium tumefaciens C58.</title>
        <authorList>
            <person name="Wood D.W."/>
            <person name="Setubal J.C."/>
            <person name="Kaul R."/>
            <person name="Monks D.E."/>
            <person name="Kitajima J.P."/>
            <person name="Okura V.K."/>
            <person name="Zhou Y."/>
            <person name="Chen L."/>
            <person name="Wood G.E."/>
            <person name="Almeida N.F. Jr."/>
            <person name="Woo L."/>
            <person name="Chen Y."/>
            <person name="Paulsen I.T."/>
            <person name="Eisen J.A."/>
            <person name="Karp P.D."/>
            <person name="Bovee D. Sr."/>
            <person name="Chapman P."/>
            <person name="Clendenning J."/>
            <person name="Deatherage G."/>
            <person name="Gillet W."/>
            <person name="Grant C."/>
            <person name="Kutyavin T."/>
            <person name="Levy R."/>
            <person name="Li M.-J."/>
            <person name="McClelland E."/>
            <person name="Palmieri A."/>
            <person name="Raymond C."/>
            <person name="Rouse G."/>
            <person name="Saenphimmachak C."/>
            <person name="Wu Z."/>
            <person name="Romero P."/>
            <person name="Gordon D."/>
            <person name="Zhang S."/>
            <person name="Yoo H."/>
            <person name="Tao Y."/>
            <person name="Biddle P."/>
            <person name="Jung M."/>
            <person name="Krespan W."/>
            <person name="Perry M."/>
            <person name="Gordon-Kamm B."/>
            <person name="Liao L."/>
            <person name="Kim S."/>
            <person name="Hendrick C."/>
            <person name="Zhao Z.-Y."/>
            <person name="Dolan M."/>
            <person name="Chumley F."/>
            <person name="Tingey S.V."/>
            <person name="Tomb J.-F."/>
            <person name="Gordon M.P."/>
            <person name="Olson M.V."/>
            <person name="Nester E.W."/>
        </authorList>
    </citation>
    <scope>NUCLEOTIDE SEQUENCE [LARGE SCALE GENOMIC DNA]</scope>
    <source>
        <strain>C58 / ATCC 33970</strain>
    </source>
</reference>
<reference key="2">
    <citation type="journal article" date="2001" name="Science">
        <title>Genome sequence of the plant pathogen and biotechnology agent Agrobacterium tumefaciens C58.</title>
        <authorList>
            <person name="Goodner B."/>
            <person name="Hinkle G."/>
            <person name="Gattung S."/>
            <person name="Miller N."/>
            <person name="Blanchard M."/>
            <person name="Qurollo B."/>
            <person name="Goldman B.S."/>
            <person name="Cao Y."/>
            <person name="Askenazi M."/>
            <person name="Halling C."/>
            <person name="Mullin L."/>
            <person name="Houmiel K."/>
            <person name="Gordon J."/>
            <person name="Vaudin M."/>
            <person name="Iartchouk O."/>
            <person name="Epp A."/>
            <person name="Liu F."/>
            <person name="Wollam C."/>
            <person name="Allinger M."/>
            <person name="Doughty D."/>
            <person name="Scott C."/>
            <person name="Lappas C."/>
            <person name="Markelz B."/>
            <person name="Flanagan C."/>
            <person name="Crowell C."/>
            <person name="Gurson J."/>
            <person name="Lomo C."/>
            <person name="Sear C."/>
            <person name="Strub G."/>
            <person name="Cielo C."/>
            <person name="Slater S."/>
        </authorList>
    </citation>
    <scope>NUCLEOTIDE SEQUENCE [LARGE SCALE GENOMIC DNA]</scope>
    <source>
        <strain>C58 / ATCC 33970</strain>
    </source>
</reference>
<organism>
    <name type="scientific">Agrobacterium fabrum (strain C58 / ATCC 33970)</name>
    <name type="common">Agrobacterium tumefaciens (strain C58)</name>
    <dbReference type="NCBI Taxonomy" id="176299"/>
    <lineage>
        <taxon>Bacteria</taxon>
        <taxon>Pseudomonadati</taxon>
        <taxon>Pseudomonadota</taxon>
        <taxon>Alphaproteobacteria</taxon>
        <taxon>Hyphomicrobiales</taxon>
        <taxon>Rhizobiaceae</taxon>
        <taxon>Rhizobium/Agrobacterium group</taxon>
        <taxon>Agrobacterium</taxon>
        <taxon>Agrobacterium tumefaciens complex</taxon>
    </lineage>
</organism>
<evidence type="ECO:0000255" key="1">
    <source>
        <dbReference type="HAMAP-Rule" id="MF_00276"/>
    </source>
</evidence>
<comment type="function">
    <text evidence="1">Part of the high-affinity ATP-driven potassium transport (or Kdp) system, which catalyzes the hydrolysis of ATP coupled with the electrogenic transport of potassium into the cytoplasm. This subunit acts as a catalytic chaperone that increases the ATP-binding affinity of the ATP-hydrolyzing subunit KdpB by the formation of a transient KdpB/KdpC/ATP ternary complex.</text>
</comment>
<comment type="subunit">
    <text evidence="1">The system is composed of three essential subunits: KdpA, KdpB and KdpC.</text>
</comment>
<comment type="subcellular location">
    <subcellularLocation>
        <location evidence="1">Cell inner membrane</location>
        <topology evidence="1">Single-pass membrane protein</topology>
    </subcellularLocation>
</comment>
<comment type="similarity">
    <text evidence="1">Belongs to the KdpC family.</text>
</comment>
<name>KDPC_AGRFC</name>
<sequence>MFRQFRPALVLILATTAITGLAYPLGMTGLAQALFPVQANGSMIEKDGKVVGSQLIGQAFTGETYFHGRPSAAGDGYNAASSSGSNLGPTSAKLIDRVKTDYEAAKAENPAAEVPADLVTASGSGLDPHVSPEAAYFQVPRVAKARGMDETALRALVDRHVEAPELGFMGEPVVNILALNMALDAAGS</sequence>
<protein>
    <recommendedName>
        <fullName evidence="1">Potassium-transporting ATPase KdpC subunit</fullName>
    </recommendedName>
    <alternativeName>
        <fullName evidence="1">ATP phosphohydrolase [potassium-transporting] C chain</fullName>
    </alternativeName>
    <alternativeName>
        <fullName evidence="1">Potassium-binding and translocating subunit C</fullName>
    </alternativeName>
    <alternativeName>
        <fullName evidence="1">Potassium-translocating ATPase C chain</fullName>
    </alternativeName>
</protein>
<feature type="chain" id="PRO_0000196981" description="Potassium-transporting ATPase KdpC subunit">
    <location>
        <begin position="1"/>
        <end position="188"/>
    </location>
</feature>
<feature type="transmembrane region" description="Helical" evidence="1">
    <location>
        <begin position="7"/>
        <end position="27"/>
    </location>
</feature>